<keyword id="KW-0436">Ligase</keyword>
<keyword id="KW-0597">Phosphoprotein</keyword>
<keyword id="KW-0662">Pyridine nucleotide biosynthesis</keyword>
<keyword id="KW-1185">Reference proteome</keyword>
<organism>
    <name type="scientific">Nitrobacter hamburgensis (strain DSM 10229 / NCIMB 13809 / X14)</name>
    <dbReference type="NCBI Taxonomy" id="323097"/>
    <lineage>
        <taxon>Bacteria</taxon>
        <taxon>Pseudomonadati</taxon>
        <taxon>Pseudomonadota</taxon>
        <taxon>Alphaproteobacteria</taxon>
        <taxon>Hyphomicrobiales</taxon>
        <taxon>Nitrobacteraceae</taxon>
        <taxon>Nitrobacter</taxon>
    </lineage>
</organism>
<evidence type="ECO:0000255" key="1">
    <source>
        <dbReference type="HAMAP-Rule" id="MF_00570"/>
    </source>
</evidence>
<protein>
    <recommendedName>
        <fullName evidence="1">Nicotinate phosphoribosyltransferase</fullName>
        <shortName evidence="1">NAPRTase</shortName>
        <ecNumber evidence="1">6.3.4.21</ecNumber>
    </recommendedName>
</protein>
<accession>Q1QI14</accession>
<gene>
    <name evidence="1" type="primary">pncB</name>
    <name type="ordered locus">Nham_3403</name>
</gene>
<name>PNCB_NITHX</name>
<reference key="1">
    <citation type="submission" date="2006-03" db="EMBL/GenBank/DDBJ databases">
        <title>Complete sequence of chromosome of Nitrobacter hamburgensis X14.</title>
        <authorList>
            <consortium name="US DOE Joint Genome Institute"/>
            <person name="Copeland A."/>
            <person name="Lucas S."/>
            <person name="Lapidus A."/>
            <person name="Barry K."/>
            <person name="Detter J.C."/>
            <person name="Glavina del Rio T."/>
            <person name="Hammon N."/>
            <person name="Israni S."/>
            <person name="Dalin E."/>
            <person name="Tice H."/>
            <person name="Pitluck S."/>
            <person name="Chain P."/>
            <person name="Malfatti S."/>
            <person name="Shin M."/>
            <person name="Vergez L."/>
            <person name="Schmutz J."/>
            <person name="Larimer F."/>
            <person name="Land M."/>
            <person name="Hauser L."/>
            <person name="Kyrpides N."/>
            <person name="Ivanova N."/>
            <person name="Ward B."/>
            <person name="Arp D."/>
            <person name="Klotz M."/>
            <person name="Stein L."/>
            <person name="O'Mullan G."/>
            <person name="Starkenburg S."/>
            <person name="Sayavedra L."/>
            <person name="Poret-Peterson A.T."/>
            <person name="Gentry M.E."/>
            <person name="Bruce D."/>
            <person name="Richardson P."/>
        </authorList>
    </citation>
    <scope>NUCLEOTIDE SEQUENCE [LARGE SCALE GENOMIC DNA]</scope>
    <source>
        <strain>DSM 10229 / NCIMB 13809 / X14</strain>
    </source>
</reference>
<sequence>MTVTDIATRTYNHGWRLDPIVRSLLDTDFYKLLMLQMIREFYPNEHVTFSVINRSRHVRLAEAIDEGELRAQLDHARSIRFSKNELIWLAGNTFYGKTQMFSPDFIDWLATFRLGEYELRKVDGQYELHFHGPWTHTTMWEIPALAILNELRSRQVTKGQGRFALDVLYARAKAKLWAKVERLRKLDDLWLSDFGTRRRHGFLWQRWCVEAAKEGLGPAFTGTSNVLLAMDNDLEAIGTNAHELPMVAAALADDDTALRRAPYRILDQWRHTYGGNLLVALPDAFGTQAFLRDAPEWVADWTGFRPDSLPPIAAGEEIIKWWKQKSRDPREKLLVFSDGMDVDSIEETYHHFAGRVRVSFGWGTNLTNDFVGCSPDGTVDLDPISIVCKVTSVNGRPAVKLSDNPEKATGEPSEIERYLRVFGSAGRVRAPVHV</sequence>
<comment type="function">
    <text evidence="1">Catalyzes the synthesis of beta-nicotinate D-ribonucleotide from nicotinate and 5-phospho-D-ribose 1-phosphate at the expense of ATP.</text>
</comment>
<comment type="catalytic activity">
    <reaction evidence="1">
        <text>nicotinate + 5-phospho-alpha-D-ribose 1-diphosphate + ATP + H2O = nicotinate beta-D-ribonucleotide + ADP + phosphate + diphosphate</text>
        <dbReference type="Rhea" id="RHEA:36163"/>
        <dbReference type="ChEBI" id="CHEBI:15377"/>
        <dbReference type="ChEBI" id="CHEBI:30616"/>
        <dbReference type="ChEBI" id="CHEBI:32544"/>
        <dbReference type="ChEBI" id="CHEBI:33019"/>
        <dbReference type="ChEBI" id="CHEBI:43474"/>
        <dbReference type="ChEBI" id="CHEBI:57502"/>
        <dbReference type="ChEBI" id="CHEBI:58017"/>
        <dbReference type="ChEBI" id="CHEBI:456216"/>
        <dbReference type="EC" id="6.3.4.21"/>
    </reaction>
</comment>
<comment type="pathway">
    <text evidence="1">Cofactor biosynthesis; NAD(+) biosynthesis; nicotinate D-ribonucleotide from nicotinate: step 1/1.</text>
</comment>
<comment type="PTM">
    <text evidence="1">Transiently phosphorylated on a His residue during the reaction cycle. Phosphorylation strongly increases the affinity for substrates and increases the rate of nicotinate D-ribonucleotide production. Dephosphorylation regenerates the low-affinity form of the enzyme, leading to product release.</text>
</comment>
<comment type="similarity">
    <text evidence="1">Belongs to the NAPRTase family.</text>
</comment>
<dbReference type="EC" id="6.3.4.21" evidence="1"/>
<dbReference type="EMBL" id="CP000319">
    <property type="protein sequence ID" value="ABE64133.1"/>
    <property type="molecule type" value="Genomic_DNA"/>
</dbReference>
<dbReference type="RefSeq" id="WP_011511785.1">
    <property type="nucleotide sequence ID" value="NC_007964.1"/>
</dbReference>
<dbReference type="SMR" id="Q1QI14"/>
<dbReference type="STRING" id="323097.Nham_3403"/>
<dbReference type="KEGG" id="nha:Nham_3403"/>
<dbReference type="eggNOG" id="COG1488">
    <property type="taxonomic scope" value="Bacteria"/>
</dbReference>
<dbReference type="HOGENOM" id="CLU_030991_1_0_5"/>
<dbReference type="OrthoDB" id="9771406at2"/>
<dbReference type="UniPathway" id="UPA00253">
    <property type="reaction ID" value="UER00457"/>
</dbReference>
<dbReference type="Proteomes" id="UP000001953">
    <property type="component" value="Chromosome"/>
</dbReference>
<dbReference type="GO" id="GO:0005829">
    <property type="term" value="C:cytosol"/>
    <property type="evidence" value="ECO:0007669"/>
    <property type="project" value="TreeGrafter"/>
</dbReference>
<dbReference type="GO" id="GO:0004516">
    <property type="term" value="F:nicotinate phosphoribosyltransferase activity"/>
    <property type="evidence" value="ECO:0007669"/>
    <property type="project" value="UniProtKB-UniRule"/>
</dbReference>
<dbReference type="GO" id="GO:0034355">
    <property type="term" value="P:NAD biosynthetic process via the salvage pathway"/>
    <property type="evidence" value="ECO:0007669"/>
    <property type="project" value="TreeGrafter"/>
</dbReference>
<dbReference type="Gene3D" id="3.20.140.10">
    <property type="entry name" value="nicotinate phosphoribosyltransferase"/>
    <property type="match status" value="1"/>
</dbReference>
<dbReference type="HAMAP" id="MF_00570">
    <property type="entry name" value="NAPRTase"/>
    <property type="match status" value="1"/>
</dbReference>
<dbReference type="InterPro" id="IPR041525">
    <property type="entry name" value="N/Namide_PRibTrfase"/>
</dbReference>
<dbReference type="InterPro" id="IPR040727">
    <property type="entry name" value="NAPRTase_N"/>
</dbReference>
<dbReference type="InterPro" id="IPR006406">
    <property type="entry name" value="Nic_PRibTrfase"/>
</dbReference>
<dbReference type="InterPro" id="IPR007229">
    <property type="entry name" value="Nic_PRibTrfase-Fam"/>
</dbReference>
<dbReference type="InterPro" id="IPR036068">
    <property type="entry name" value="Nicotinate_pribotase-like_C"/>
</dbReference>
<dbReference type="NCBIfam" id="TIGR01514">
    <property type="entry name" value="NAPRTase"/>
    <property type="match status" value="1"/>
</dbReference>
<dbReference type="NCBIfam" id="NF003704">
    <property type="entry name" value="PRK05321.1"/>
    <property type="match status" value="1"/>
</dbReference>
<dbReference type="PANTHER" id="PTHR11098">
    <property type="entry name" value="NICOTINATE PHOSPHORIBOSYLTRANSFERASE"/>
    <property type="match status" value="1"/>
</dbReference>
<dbReference type="PANTHER" id="PTHR11098:SF1">
    <property type="entry name" value="NICOTINATE PHOSPHORIBOSYLTRANSFERASE"/>
    <property type="match status" value="1"/>
</dbReference>
<dbReference type="Pfam" id="PF04095">
    <property type="entry name" value="NAPRTase"/>
    <property type="match status" value="1"/>
</dbReference>
<dbReference type="Pfam" id="PF17767">
    <property type="entry name" value="NAPRTase_N"/>
    <property type="match status" value="1"/>
</dbReference>
<dbReference type="PIRSF" id="PIRSF000484">
    <property type="entry name" value="NAPRT"/>
    <property type="match status" value="1"/>
</dbReference>
<dbReference type="SUPFAM" id="SSF51690">
    <property type="entry name" value="Nicotinate/Quinolinate PRTase C-terminal domain-like"/>
    <property type="match status" value="1"/>
</dbReference>
<dbReference type="SUPFAM" id="SSF54675">
    <property type="entry name" value="Nicotinate/Quinolinate PRTase N-terminal domain-like"/>
    <property type="match status" value="1"/>
</dbReference>
<proteinExistence type="inferred from homology"/>
<feature type="chain" id="PRO_1000146845" description="Nicotinate phosphoribosyltransferase">
    <location>
        <begin position="1"/>
        <end position="434"/>
    </location>
</feature>
<feature type="modified residue" description="Phosphohistidine; by autocatalysis" evidence="1">
    <location>
        <position position="242"/>
    </location>
</feature>